<organism>
    <name type="scientific">Azorhizobium caulinodans (strain ATCC 43989 / DSM 5975 / JCM 20966 / LMG 6465 / NBRC 14845 / NCIMB 13405 / ORS 571)</name>
    <dbReference type="NCBI Taxonomy" id="438753"/>
    <lineage>
        <taxon>Bacteria</taxon>
        <taxon>Pseudomonadati</taxon>
        <taxon>Pseudomonadota</taxon>
        <taxon>Alphaproteobacteria</taxon>
        <taxon>Hyphomicrobiales</taxon>
        <taxon>Xanthobacteraceae</taxon>
        <taxon>Azorhizobium</taxon>
    </lineage>
</organism>
<protein>
    <recommendedName>
        <fullName evidence="1">Translation initiation factor IF-1</fullName>
    </recommendedName>
</protein>
<feature type="chain" id="PRO_0000338764" description="Translation initiation factor IF-1">
    <location>
        <begin position="1"/>
        <end position="91"/>
    </location>
</feature>
<feature type="domain" description="S1-like" evidence="1">
    <location>
        <begin position="1"/>
        <end position="72"/>
    </location>
</feature>
<feature type="region of interest" description="Disordered" evidence="2">
    <location>
        <begin position="70"/>
        <end position="91"/>
    </location>
</feature>
<proteinExistence type="inferred from homology"/>
<accession>A8I655</accession>
<sequence length="91" mass="10564">MAKEELLEFEGTVTEVLPDGNFRVRLDNDHQILAYAAGKMKKNRIRTIEGDRVVVEMSPYDLDRGRINFRHKAEGNAPPPGARRQQNFRRR</sequence>
<comment type="function">
    <text evidence="1">One of the essential components for the initiation of protein synthesis. Stabilizes the binding of IF-2 and IF-3 on the 30S subunit to which N-formylmethionyl-tRNA(fMet) subsequently binds. Helps modulate mRNA selection, yielding the 30S pre-initiation complex (PIC). Upon addition of the 50S ribosomal subunit IF-1, IF-2 and IF-3 are released leaving the mature 70S translation initiation complex.</text>
</comment>
<comment type="subunit">
    <text evidence="1">Component of the 30S ribosomal translation pre-initiation complex which assembles on the 30S ribosome in the order IF-2 and IF-3, IF-1 and N-formylmethionyl-tRNA(fMet); mRNA recruitment can occur at any time during PIC assembly.</text>
</comment>
<comment type="subcellular location">
    <subcellularLocation>
        <location evidence="1">Cytoplasm</location>
    </subcellularLocation>
</comment>
<comment type="similarity">
    <text evidence="1">Belongs to the IF-1 family.</text>
</comment>
<keyword id="KW-0963">Cytoplasm</keyword>
<keyword id="KW-0396">Initiation factor</keyword>
<keyword id="KW-0648">Protein biosynthesis</keyword>
<keyword id="KW-1185">Reference proteome</keyword>
<keyword id="KW-0694">RNA-binding</keyword>
<keyword id="KW-0699">rRNA-binding</keyword>
<name>IF1_AZOC5</name>
<gene>
    <name evidence="1" type="primary">infA</name>
    <name type="ordered locus">AZC_2365</name>
</gene>
<reference key="1">
    <citation type="submission" date="2007-04" db="EMBL/GenBank/DDBJ databases">
        <title>Complete genome sequence of the nitrogen-fixing bacterium Azorhizobium caulinodans ORS571.</title>
        <authorList>
            <person name="Lee K.B."/>
            <person name="Backer P.D."/>
            <person name="Aono T."/>
            <person name="Liu C.T."/>
            <person name="Suzuki S."/>
            <person name="Suzuki T."/>
            <person name="Kaneko T."/>
            <person name="Yamada M."/>
            <person name="Tabata S."/>
            <person name="Kupfer D.M."/>
            <person name="Najar F.Z."/>
            <person name="Wiley G.B."/>
            <person name="Roe B."/>
            <person name="Binnewies T."/>
            <person name="Ussery D."/>
            <person name="Vereecke D."/>
            <person name="Gevers D."/>
            <person name="Holsters M."/>
            <person name="Oyaizu H."/>
        </authorList>
    </citation>
    <scope>NUCLEOTIDE SEQUENCE [LARGE SCALE GENOMIC DNA]</scope>
    <source>
        <strain>ATCC 43989 / DSM 5975 / JCM 20966 / LMG 6465 / NBRC 14845 / NCIMB 13405 / ORS 571</strain>
    </source>
</reference>
<evidence type="ECO:0000255" key="1">
    <source>
        <dbReference type="HAMAP-Rule" id="MF_00075"/>
    </source>
</evidence>
<evidence type="ECO:0000256" key="2">
    <source>
        <dbReference type="SAM" id="MobiDB-lite"/>
    </source>
</evidence>
<dbReference type="EMBL" id="AP009384">
    <property type="protein sequence ID" value="BAF88363.1"/>
    <property type="molecule type" value="Genomic_DNA"/>
</dbReference>
<dbReference type="RefSeq" id="WP_012115181.1">
    <property type="nucleotide sequence ID" value="NC_009937.1"/>
</dbReference>
<dbReference type="SMR" id="A8I655"/>
<dbReference type="STRING" id="438753.AZC_2365"/>
<dbReference type="GeneID" id="95774319"/>
<dbReference type="KEGG" id="azc:AZC_2365"/>
<dbReference type="eggNOG" id="COG0361">
    <property type="taxonomic scope" value="Bacteria"/>
</dbReference>
<dbReference type="HOGENOM" id="CLU_151267_4_1_5"/>
<dbReference type="Proteomes" id="UP000000270">
    <property type="component" value="Chromosome"/>
</dbReference>
<dbReference type="GO" id="GO:0005829">
    <property type="term" value="C:cytosol"/>
    <property type="evidence" value="ECO:0007669"/>
    <property type="project" value="TreeGrafter"/>
</dbReference>
<dbReference type="GO" id="GO:0043022">
    <property type="term" value="F:ribosome binding"/>
    <property type="evidence" value="ECO:0007669"/>
    <property type="project" value="UniProtKB-UniRule"/>
</dbReference>
<dbReference type="GO" id="GO:0019843">
    <property type="term" value="F:rRNA binding"/>
    <property type="evidence" value="ECO:0007669"/>
    <property type="project" value="UniProtKB-UniRule"/>
</dbReference>
<dbReference type="GO" id="GO:0003743">
    <property type="term" value="F:translation initiation factor activity"/>
    <property type="evidence" value="ECO:0007669"/>
    <property type="project" value="UniProtKB-UniRule"/>
</dbReference>
<dbReference type="CDD" id="cd04451">
    <property type="entry name" value="S1_IF1"/>
    <property type="match status" value="1"/>
</dbReference>
<dbReference type="FunFam" id="2.40.50.140:FF:000002">
    <property type="entry name" value="Translation initiation factor IF-1"/>
    <property type="match status" value="1"/>
</dbReference>
<dbReference type="Gene3D" id="2.40.50.140">
    <property type="entry name" value="Nucleic acid-binding proteins"/>
    <property type="match status" value="1"/>
</dbReference>
<dbReference type="HAMAP" id="MF_00075">
    <property type="entry name" value="IF_1"/>
    <property type="match status" value="1"/>
</dbReference>
<dbReference type="InterPro" id="IPR012340">
    <property type="entry name" value="NA-bd_OB-fold"/>
</dbReference>
<dbReference type="InterPro" id="IPR006196">
    <property type="entry name" value="RNA-binding_domain_S1_IF1"/>
</dbReference>
<dbReference type="InterPro" id="IPR003029">
    <property type="entry name" value="S1_domain"/>
</dbReference>
<dbReference type="InterPro" id="IPR004368">
    <property type="entry name" value="TIF_IF1"/>
</dbReference>
<dbReference type="NCBIfam" id="TIGR00008">
    <property type="entry name" value="infA"/>
    <property type="match status" value="1"/>
</dbReference>
<dbReference type="PANTHER" id="PTHR33370">
    <property type="entry name" value="TRANSLATION INITIATION FACTOR IF-1, CHLOROPLASTIC"/>
    <property type="match status" value="1"/>
</dbReference>
<dbReference type="PANTHER" id="PTHR33370:SF1">
    <property type="entry name" value="TRANSLATION INITIATION FACTOR IF-1, CHLOROPLASTIC"/>
    <property type="match status" value="1"/>
</dbReference>
<dbReference type="Pfam" id="PF01176">
    <property type="entry name" value="eIF-1a"/>
    <property type="match status" value="1"/>
</dbReference>
<dbReference type="SMART" id="SM00316">
    <property type="entry name" value="S1"/>
    <property type="match status" value="1"/>
</dbReference>
<dbReference type="SUPFAM" id="SSF50249">
    <property type="entry name" value="Nucleic acid-binding proteins"/>
    <property type="match status" value="1"/>
</dbReference>
<dbReference type="PROSITE" id="PS50832">
    <property type="entry name" value="S1_IF1_TYPE"/>
    <property type="match status" value="1"/>
</dbReference>